<feature type="chain" id="PRO_0000390880" description="Fluoroquinolones export permease protein Rv2687c">
    <location>
        <begin position="1"/>
        <end position="237"/>
    </location>
</feature>
<feature type="transmembrane region" description="Helical" evidence="1">
    <location>
        <begin position="20"/>
        <end position="40"/>
    </location>
</feature>
<feature type="transmembrane region" description="Helical" evidence="1">
    <location>
        <begin position="49"/>
        <end position="69"/>
    </location>
</feature>
<feature type="transmembrane region" description="Helical" evidence="1">
    <location>
        <begin position="96"/>
        <end position="116"/>
    </location>
</feature>
<feature type="transmembrane region" description="Helical" evidence="1">
    <location>
        <begin position="119"/>
        <end position="139"/>
    </location>
</feature>
<feature type="transmembrane region" description="Helical" evidence="1">
    <location>
        <begin position="147"/>
        <end position="167"/>
    </location>
</feature>
<feature type="transmembrane region" description="Helical" evidence="1">
    <location>
        <begin position="199"/>
        <end position="219"/>
    </location>
</feature>
<reference key="1">
    <citation type="journal article" date="1998" name="Nature">
        <title>Deciphering the biology of Mycobacterium tuberculosis from the complete genome sequence.</title>
        <authorList>
            <person name="Cole S.T."/>
            <person name="Brosch R."/>
            <person name="Parkhill J."/>
            <person name="Garnier T."/>
            <person name="Churcher C.M."/>
            <person name="Harris D.E."/>
            <person name="Gordon S.V."/>
            <person name="Eiglmeier K."/>
            <person name="Gas S."/>
            <person name="Barry C.E. III"/>
            <person name="Tekaia F."/>
            <person name="Badcock K."/>
            <person name="Basham D."/>
            <person name="Brown D."/>
            <person name="Chillingworth T."/>
            <person name="Connor R."/>
            <person name="Davies R.M."/>
            <person name="Devlin K."/>
            <person name="Feltwell T."/>
            <person name="Gentles S."/>
            <person name="Hamlin N."/>
            <person name="Holroyd S."/>
            <person name="Hornsby T."/>
            <person name="Jagels K."/>
            <person name="Krogh A."/>
            <person name="McLean J."/>
            <person name="Moule S."/>
            <person name="Murphy L.D."/>
            <person name="Oliver S."/>
            <person name="Osborne J."/>
            <person name="Quail M.A."/>
            <person name="Rajandream M.A."/>
            <person name="Rogers J."/>
            <person name="Rutter S."/>
            <person name="Seeger K."/>
            <person name="Skelton S."/>
            <person name="Squares S."/>
            <person name="Squares R."/>
            <person name="Sulston J.E."/>
            <person name="Taylor K."/>
            <person name="Whitehead S."/>
            <person name="Barrell B.G."/>
        </authorList>
    </citation>
    <scope>NUCLEOTIDE SEQUENCE [LARGE SCALE GENOMIC DNA]</scope>
    <source>
        <strain>ATCC 25618 / H37Rv</strain>
    </source>
</reference>
<reference key="2">
    <citation type="journal article" date="2004" name="Antimicrob. Agents Chemother.">
        <title>Rv2686c-Rv2687c-Rv2688c, an ABC fluoroquinolone efflux pump in Mycobacterium tuberculosis.</title>
        <authorList>
            <person name="Pasca M.R."/>
            <person name="Guglierame P."/>
            <person name="Arcesi F."/>
            <person name="Bellinzoni M."/>
            <person name="De Rossi E."/>
            <person name="Riccardi G."/>
        </authorList>
    </citation>
    <scope>FUNCTION IN FLUOROQUINOLONES EXPORT</scope>
    <scope>SUBUNIT</scope>
    <source>
        <strain>ATCC 25618 / H37Rv</strain>
    </source>
</reference>
<protein>
    <recommendedName>
        <fullName>Fluoroquinolones export permease protein Rv2687c</fullName>
    </recommendedName>
</protein>
<proteinExistence type="evidence at protein level"/>
<sequence>MTRLVPALRLELTLQVRQKFLHAAVFSGLIWLAVLLPMPVSLRPVAEPYVLVGDIAIIGFFFVGGTVFFEKQERTIGAIVSTPLRFWEYLAAKLTVLLAISLFVAVVVATIVHGLGYHLLPLVAGIVLGTLLMLLVGFSSSLPFASVTDWFLAAVIPLAIMLAPPVVHYSGLWPNPVLYLIPTQGPLLLLGAAFDQVSLAPWQVGYAVVYPIVCAAGLCRAAKALFGRYVVQRSGVL</sequence>
<evidence type="ECO:0000255" key="1"/>
<evidence type="ECO:0000269" key="2">
    <source>
    </source>
</evidence>
<evidence type="ECO:0000305" key="3"/>
<evidence type="ECO:0000305" key="4">
    <source>
    </source>
</evidence>
<name>FLQE3_MYCTU</name>
<gene>
    <name type="ordered locus">Rv2687c</name>
</gene>
<comment type="function">
    <text evidence="2">Part of the ABC transporter complex Rv2686c/Rv2687c/Rv2688c involved in fluoroquinolones export. Confers resistance to ciprofloxacin and, to a lesser extent, norfloxacin, moxifloxacin and sparfloxacin. Probably responsible for the translocation of the substrate across the membrane.</text>
</comment>
<comment type="subunit">
    <text evidence="4">The complex is composed of 2 ATP-binding proteins (Rv2688c) and 2 transmembrane proteins (Rv2686c and Rv2687c).</text>
</comment>
<comment type="subcellular location">
    <subcellularLocation>
        <location evidence="3">Cell membrane</location>
        <topology evidence="3">Multi-pass membrane protein</topology>
    </subcellularLocation>
</comment>
<keyword id="KW-0046">Antibiotic resistance</keyword>
<keyword id="KW-1003">Cell membrane</keyword>
<keyword id="KW-0472">Membrane</keyword>
<keyword id="KW-1185">Reference proteome</keyword>
<keyword id="KW-0812">Transmembrane</keyword>
<keyword id="KW-1133">Transmembrane helix</keyword>
<keyword id="KW-0813">Transport</keyword>
<accession>P9WJB1</accession>
<accession>L0TAC5</accession>
<accession>O07189</accession>
<accession>Q7D6S0</accession>
<organism>
    <name type="scientific">Mycobacterium tuberculosis (strain ATCC 25618 / H37Rv)</name>
    <dbReference type="NCBI Taxonomy" id="83332"/>
    <lineage>
        <taxon>Bacteria</taxon>
        <taxon>Bacillati</taxon>
        <taxon>Actinomycetota</taxon>
        <taxon>Actinomycetes</taxon>
        <taxon>Mycobacteriales</taxon>
        <taxon>Mycobacteriaceae</taxon>
        <taxon>Mycobacterium</taxon>
        <taxon>Mycobacterium tuberculosis complex</taxon>
    </lineage>
</organism>
<dbReference type="EMBL" id="AL123456">
    <property type="protein sequence ID" value="CCP45485.1"/>
    <property type="molecule type" value="Genomic_DNA"/>
</dbReference>
<dbReference type="PIR" id="B70529">
    <property type="entry name" value="B70529"/>
</dbReference>
<dbReference type="RefSeq" id="NP_217203.1">
    <property type="nucleotide sequence ID" value="NC_000962.3"/>
</dbReference>
<dbReference type="RefSeq" id="WP_003413912.1">
    <property type="nucleotide sequence ID" value="NZ_NVQJ01000017.1"/>
</dbReference>
<dbReference type="SMR" id="P9WJB1"/>
<dbReference type="FunCoup" id="P9WJB1">
    <property type="interactions" value="83"/>
</dbReference>
<dbReference type="STRING" id="83332.Rv2687c"/>
<dbReference type="PaxDb" id="83332-Rv2687c"/>
<dbReference type="DNASU" id="888446"/>
<dbReference type="GeneID" id="888446"/>
<dbReference type="KEGG" id="mtu:Rv2687c"/>
<dbReference type="KEGG" id="mtv:RVBD_2687c"/>
<dbReference type="TubercuList" id="Rv2687c"/>
<dbReference type="eggNOG" id="COG1668">
    <property type="taxonomic scope" value="Bacteria"/>
</dbReference>
<dbReference type="InParanoid" id="P9WJB1"/>
<dbReference type="OrthoDB" id="3619398at2"/>
<dbReference type="PhylomeDB" id="P9WJB1"/>
<dbReference type="Proteomes" id="UP000001584">
    <property type="component" value="Chromosome"/>
</dbReference>
<dbReference type="GO" id="GO:0005886">
    <property type="term" value="C:plasma membrane"/>
    <property type="evidence" value="ECO:0007669"/>
    <property type="project" value="UniProtKB-SubCell"/>
</dbReference>
<dbReference type="GO" id="GO:0015562">
    <property type="term" value="F:efflux transmembrane transporter activity"/>
    <property type="evidence" value="ECO:0000315"/>
    <property type="project" value="MTBBASE"/>
</dbReference>
<dbReference type="GO" id="GO:0046677">
    <property type="term" value="P:response to antibiotic"/>
    <property type="evidence" value="ECO:0007669"/>
    <property type="project" value="UniProtKB-KW"/>
</dbReference>
<dbReference type="GO" id="GO:0055085">
    <property type="term" value="P:transmembrane transport"/>
    <property type="evidence" value="ECO:0000315"/>
    <property type="project" value="MTBBASE"/>
</dbReference>
<dbReference type="InterPro" id="IPR056926">
    <property type="entry name" value="FLQE3_permease"/>
</dbReference>
<dbReference type="Pfam" id="PF24686">
    <property type="entry name" value="FLQE3_permease"/>
    <property type="match status" value="1"/>
</dbReference>